<name>ENVZ_SHIFL</name>
<protein>
    <recommendedName>
        <fullName evidence="6">Sensor histidine kinase EnvZ</fullName>
        <ecNumber evidence="2">2.7.13.3</ecNumber>
    </recommendedName>
    <alternativeName>
        <fullName evidence="6">Osmolarity sensor protein EnzV</fullName>
    </alternativeName>
</protein>
<proteinExistence type="evidence at protein level"/>
<comment type="function">
    <text evidence="1 2">Member of the two-component regulatory system EnvZ/OmpR involved in the regulation of osmoregulation (genes ompF and ompC). EnvZ functions as a membrane-associated protein kinase that phosphorylates OmpR in response to environmental signals (By similarity). This two-component system plays a role in virulence (By similarity).</text>
</comment>
<comment type="catalytic activity">
    <reaction evidence="2">
        <text>ATP + protein L-histidine = ADP + protein N-phospho-L-histidine.</text>
        <dbReference type="EC" id="2.7.13.3"/>
    </reaction>
</comment>
<comment type="subunit">
    <text evidence="2">Homodimer.</text>
</comment>
<comment type="subcellular location">
    <subcellularLocation>
        <location evidence="2">Cell inner membrane</location>
        <topology evidence="3">Multi-pass membrane protein</topology>
    </subcellularLocation>
</comment>
<comment type="domain">
    <text evidence="2">Has several major domains; the N-terminal cytoplasmic domain is followed by 2 transmembrane helices that anchor the protein in the membrane; the periplasmic domain between the helices interacts with MrzA. The cytoplasmic C-terminal domain has a HAMP domain joined by a flexible linker to a histidine kinase domain. The HAMP domain by itself is intrinsically disordered. The cytoplasmic dimerization domain (CDD) forms an osmosensitive core and includes the autophosphorylated histidine residue.</text>
</comment>
<comment type="PTM">
    <text evidence="2">Autophosphorylated.</text>
</comment>
<evidence type="ECO:0000250" key="1">
    <source>
        <dbReference type="UniProtKB" id="A0A4P7TSF2"/>
    </source>
</evidence>
<evidence type="ECO:0000250" key="2">
    <source>
        <dbReference type="UniProtKB" id="P0AEJ4"/>
    </source>
</evidence>
<evidence type="ECO:0000255" key="3"/>
<evidence type="ECO:0000255" key="4">
    <source>
        <dbReference type="PROSITE-ProRule" id="PRU00102"/>
    </source>
</evidence>
<evidence type="ECO:0000255" key="5">
    <source>
        <dbReference type="PROSITE-ProRule" id="PRU00107"/>
    </source>
</evidence>
<evidence type="ECO:0000305" key="6"/>
<evidence type="ECO:0007829" key="7">
    <source>
        <dbReference type="PDB" id="2LFR"/>
    </source>
</evidence>
<gene>
    <name type="primary">envZ</name>
    <name type="ordered locus">SF3423</name>
    <name type="ordered locus">S4340</name>
</gene>
<organism>
    <name type="scientific">Shigella flexneri</name>
    <dbReference type="NCBI Taxonomy" id="623"/>
    <lineage>
        <taxon>Bacteria</taxon>
        <taxon>Pseudomonadati</taxon>
        <taxon>Pseudomonadota</taxon>
        <taxon>Gammaproteobacteria</taxon>
        <taxon>Enterobacterales</taxon>
        <taxon>Enterobacteriaceae</taxon>
        <taxon>Shigella</taxon>
    </lineage>
</organism>
<keyword id="KW-0002">3D-structure</keyword>
<keyword id="KW-0067">ATP-binding</keyword>
<keyword id="KW-0997">Cell inner membrane</keyword>
<keyword id="KW-1003">Cell membrane</keyword>
<keyword id="KW-0418">Kinase</keyword>
<keyword id="KW-0472">Membrane</keyword>
<keyword id="KW-0547">Nucleotide-binding</keyword>
<keyword id="KW-0597">Phosphoprotein</keyword>
<keyword id="KW-1185">Reference proteome</keyword>
<keyword id="KW-0346">Stress response</keyword>
<keyword id="KW-0808">Transferase</keyword>
<keyword id="KW-0812">Transmembrane</keyword>
<keyword id="KW-1133">Transmembrane helix</keyword>
<keyword id="KW-0902">Two-component regulatory system</keyword>
<keyword id="KW-0843">Virulence</keyword>
<feature type="chain" id="PRO_0000074762" description="Sensor histidine kinase EnvZ">
    <location>
        <begin position="1"/>
        <end position="450"/>
    </location>
</feature>
<feature type="topological domain" description="Cytoplasmic" evidence="6">
    <location>
        <begin position="1"/>
        <end position="15"/>
    </location>
</feature>
<feature type="transmembrane region" description="Helical" evidence="6">
    <location>
        <begin position="16"/>
        <end position="35"/>
    </location>
</feature>
<feature type="topological domain" description="Periplasmic" evidence="6">
    <location>
        <begin position="36"/>
        <end position="158"/>
    </location>
</feature>
<feature type="transmembrane region" description="Helical" evidence="6">
    <location>
        <begin position="159"/>
        <end position="179"/>
    </location>
</feature>
<feature type="topological domain" description="Cytoplasmic" evidence="6">
    <location>
        <begin position="180"/>
        <end position="450"/>
    </location>
</feature>
<feature type="domain" description="HAMP" evidence="4">
    <location>
        <begin position="180"/>
        <end position="232"/>
    </location>
</feature>
<feature type="domain" description="Histidine kinase" evidence="5">
    <location>
        <begin position="240"/>
        <end position="440"/>
    </location>
</feature>
<feature type="region of interest" description="Cytoplasmic dimerization domain (CDD), when dimerized forms osmosensitive core" evidence="2">
    <location>
        <begin position="223"/>
        <end position="289"/>
    </location>
</feature>
<feature type="binding site" evidence="2">
    <location>
        <position position="243"/>
    </location>
    <ligand>
        <name>ATP</name>
        <dbReference type="ChEBI" id="CHEBI:30616"/>
    </ligand>
</feature>
<feature type="binding site" evidence="2">
    <location>
        <begin position="347"/>
        <end position="351"/>
    </location>
    <ligand>
        <name>ATP</name>
        <dbReference type="ChEBI" id="CHEBI:30616"/>
    </ligand>
</feature>
<feature type="binding site" evidence="2">
    <location>
        <position position="373"/>
    </location>
    <ligand>
        <name>ATP</name>
        <dbReference type="ChEBI" id="CHEBI:30616"/>
    </ligand>
</feature>
<feature type="binding site" evidence="2">
    <location>
        <begin position="392"/>
        <end position="393"/>
    </location>
    <ligand>
        <name>ATP</name>
        <dbReference type="ChEBI" id="CHEBI:30616"/>
    </ligand>
</feature>
<feature type="binding site" evidence="2">
    <location>
        <begin position="402"/>
        <end position="406"/>
    </location>
    <ligand>
        <name>ATP</name>
        <dbReference type="ChEBI" id="CHEBI:30616"/>
    </ligand>
</feature>
<feature type="modified residue" description="Phosphohistidine; by autocatalysis" evidence="2 5">
    <location>
        <position position="243"/>
    </location>
</feature>
<feature type="helix" evidence="7">
    <location>
        <begin position="229"/>
        <end position="258"/>
    </location>
</feature>
<feature type="helix" evidence="7">
    <location>
        <begin position="261"/>
        <end position="263"/>
    </location>
</feature>
<feature type="helix" evidence="7">
    <location>
        <begin position="264"/>
        <end position="287"/>
    </location>
</feature>
<sequence length="450" mass="50334">MRRLRFSPRSSFARTLLLIVTLLFASLVTTYLVVLNFAILPSLQQFNKVLAYEVRMLMTDKLQLEDGTQLVVPPAFRREIYRELGISLYSNEAAEEAGLRWAQHYEFLSHQMAQQLGGPTEVRVEVNKSSPVVWLKTWLSPNIWVRVPLTEIHQGDFSPLFRYTLAIMLLAIGGAWLFIRIQNRPLVDLEHAALQVGKGIIPPPLREYGASEVRSVTRAFNHMAAGVKQLADDRTLLMAGVSHDLRTPLTRIRLATEMMSEQDGYLAESINKDIEECNAIIEQFIDYLRTGQEMPMEMADLNAVLGEVIAAESGYEREIETALYPGSIEVKMHPLSIKRAVANMVVNAARYGNGWIKVSSGTEPNRAWFQVEDDGPGIAPEQRKHLFQPFVRGDSARTISGTGLGLAIVQRIVDNHNGMLELGTSERGGLSIRAWLPVPVTRAQGTTKEG</sequence>
<accession>P0AEJ5</accession>
<accession>P02933</accession>
<dbReference type="EC" id="2.7.13.3" evidence="2"/>
<dbReference type="EMBL" id="AJ288905">
    <property type="protein sequence ID" value="CAC34269.1"/>
    <property type="molecule type" value="Genomic_DNA"/>
</dbReference>
<dbReference type="EMBL" id="AE005674">
    <property type="protein sequence ID" value="AAN44884.1"/>
    <property type="molecule type" value="Genomic_DNA"/>
</dbReference>
<dbReference type="EMBL" id="AE014073">
    <property type="protein sequence ID" value="AAP19295.1"/>
    <property type="molecule type" value="Genomic_DNA"/>
</dbReference>
<dbReference type="RefSeq" id="NP_709177.1">
    <property type="nucleotide sequence ID" value="NC_004337.2"/>
</dbReference>
<dbReference type="RefSeq" id="WP_001253696.1">
    <property type="nucleotide sequence ID" value="NZ_WPGW01000003.1"/>
</dbReference>
<dbReference type="PDB" id="2LFR">
    <property type="method" value="NMR"/>
    <property type="chains" value="A/B=228-289"/>
</dbReference>
<dbReference type="PDB" id="2LFS">
    <property type="method" value="NMR"/>
    <property type="chains" value="A/B=228-289"/>
</dbReference>
<dbReference type="PDBsum" id="2LFR"/>
<dbReference type="PDBsum" id="2LFS"/>
<dbReference type="SMR" id="P0AEJ5"/>
<dbReference type="STRING" id="198214.SF3423"/>
<dbReference type="PaxDb" id="198214-SF3423"/>
<dbReference type="GeneID" id="1026481"/>
<dbReference type="GeneID" id="93778594"/>
<dbReference type="KEGG" id="sfl:SF3423"/>
<dbReference type="KEGG" id="sfx:S4340"/>
<dbReference type="PATRIC" id="fig|198214.7.peg.4039"/>
<dbReference type="HOGENOM" id="CLU_000445_89_27_6"/>
<dbReference type="EvolutionaryTrace" id="P0AEJ5"/>
<dbReference type="Proteomes" id="UP000001006">
    <property type="component" value="Chromosome"/>
</dbReference>
<dbReference type="Proteomes" id="UP000002673">
    <property type="component" value="Chromosome"/>
</dbReference>
<dbReference type="GO" id="GO:0005886">
    <property type="term" value="C:plasma membrane"/>
    <property type="evidence" value="ECO:0007669"/>
    <property type="project" value="UniProtKB-SubCell"/>
</dbReference>
<dbReference type="GO" id="GO:0005524">
    <property type="term" value="F:ATP binding"/>
    <property type="evidence" value="ECO:0007669"/>
    <property type="project" value="UniProtKB-KW"/>
</dbReference>
<dbReference type="GO" id="GO:0000155">
    <property type="term" value="F:phosphorelay sensor kinase activity"/>
    <property type="evidence" value="ECO:0007669"/>
    <property type="project" value="InterPro"/>
</dbReference>
<dbReference type="CDD" id="cd06225">
    <property type="entry name" value="HAMP"/>
    <property type="match status" value="1"/>
</dbReference>
<dbReference type="CDD" id="cd16950">
    <property type="entry name" value="HATPase_EnvZ-like"/>
    <property type="match status" value="1"/>
</dbReference>
<dbReference type="CDD" id="cd00082">
    <property type="entry name" value="HisKA"/>
    <property type="match status" value="1"/>
</dbReference>
<dbReference type="FunFam" id="1.10.287.130:FF:000006">
    <property type="entry name" value="Osmolarity two-component histidine kinase EnvZ"/>
    <property type="match status" value="1"/>
</dbReference>
<dbReference type="FunFam" id="3.30.565.10:FF:000018">
    <property type="entry name" value="Two-component sensor kinase EnvZ"/>
    <property type="match status" value="1"/>
</dbReference>
<dbReference type="Gene3D" id="1.10.287.130">
    <property type="match status" value="1"/>
</dbReference>
<dbReference type="Gene3D" id="3.30.565.10">
    <property type="entry name" value="Histidine kinase-like ATPase, C-terminal domain"/>
    <property type="match status" value="1"/>
</dbReference>
<dbReference type="InterPro" id="IPR050980">
    <property type="entry name" value="2C_sensor_his_kinase"/>
</dbReference>
<dbReference type="InterPro" id="IPR003660">
    <property type="entry name" value="HAMP_dom"/>
</dbReference>
<dbReference type="InterPro" id="IPR036890">
    <property type="entry name" value="HATPase_C_sf"/>
</dbReference>
<dbReference type="InterPro" id="IPR005467">
    <property type="entry name" value="His_kinase_dom"/>
</dbReference>
<dbReference type="InterPro" id="IPR003661">
    <property type="entry name" value="HisK_dim/P_dom"/>
</dbReference>
<dbReference type="InterPro" id="IPR036097">
    <property type="entry name" value="HisK_dim/P_sf"/>
</dbReference>
<dbReference type="InterPro" id="IPR004358">
    <property type="entry name" value="Sig_transdc_His_kin-like_C"/>
</dbReference>
<dbReference type="NCBIfam" id="NF007004">
    <property type="entry name" value="PRK09467.1"/>
    <property type="match status" value="1"/>
</dbReference>
<dbReference type="PANTHER" id="PTHR44936:SF5">
    <property type="entry name" value="SENSOR HISTIDINE KINASE ENVZ"/>
    <property type="match status" value="1"/>
</dbReference>
<dbReference type="PANTHER" id="PTHR44936">
    <property type="entry name" value="SENSOR PROTEIN CREC"/>
    <property type="match status" value="1"/>
</dbReference>
<dbReference type="Pfam" id="PF00672">
    <property type="entry name" value="HAMP"/>
    <property type="match status" value="1"/>
</dbReference>
<dbReference type="Pfam" id="PF02518">
    <property type="entry name" value="HATPase_c"/>
    <property type="match status" value="1"/>
</dbReference>
<dbReference type="Pfam" id="PF00512">
    <property type="entry name" value="HisKA"/>
    <property type="match status" value="1"/>
</dbReference>
<dbReference type="PRINTS" id="PR00344">
    <property type="entry name" value="BCTRLSENSOR"/>
</dbReference>
<dbReference type="SMART" id="SM00304">
    <property type="entry name" value="HAMP"/>
    <property type="match status" value="1"/>
</dbReference>
<dbReference type="SMART" id="SM00387">
    <property type="entry name" value="HATPase_c"/>
    <property type="match status" value="1"/>
</dbReference>
<dbReference type="SMART" id="SM00388">
    <property type="entry name" value="HisKA"/>
    <property type="match status" value="1"/>
</dbReference>
<dbReference type="SUPFAM" id="SSF55874">
    <property type="entry name" value="ATPase domain of HSP90 chaperone/DNA topoisomerase II/histidine kinase"/>
    <property type="match status" value="1"/>
</dbReference>
<dbReference type="SUPFAM" id="SSF47384">
    <property type="entry name" value="Homodimeric domain of signal transducing histidine kinase"/>
    <property type="match status" value="1"/>
</dbReference>
<dbReference type="PROSITE" id="PS50885">
    <property type="entry name" value="HAMP"/>
    <property type="match status" value="1"/>
</dbReference>
<dbReference type="PROSITE" id="PS50109">
    <property type="entry name" value="HIS_KIN"/>
    <property type="match status" value="1"/>
</dbReference>
<reference key="1">
    <citation type="submission" date="2000-04" db="EMBL/GenBank/DDBJ databases">
        <title>Nucleotide sequence of the ompB operon of Shigella flexneri.</title>
        <authorList>
            <person name="Weber A."/>
            <person name="Jung K."/>
        </authorList>
    </citation>
    <scope>NUCLEOTIDE SEQUENCE [GENOMIC DNA]</scope>
</reference>
<reference key="2">
    <citation type="journal article" date="2002" name="Nucleic Acids Res.">
        <title>Genome sequence of Shigella flexneri 2a: insights into pathogenicity through comparison with genomes of Escherichia coli K12 and O157.</title>
        <authorList>
            <person name="Jin Q."/>
            <person name="Yuan Z."/>
            <person name="Xu J."/>
            <person name="Wang Y."/>
            <person name="Shen Y."/>
            <person name="Lu W."/>
            <person name="Wang J."/>
            <person name="Liu H."/>
            <person name="Yang J."/>
            <person name="Yang F."/>
            <person name="Zhang X."/>
            <person name="Zhang J."/>
            <person name="Yang G."/>
            <person name="Wu H."/>
            <person name="Qu D."/>
            <person name="Dong J."/>
            <person name="Sun L."/>
            <person name="Xue Y."/>
            <person name="Zhao A."/>
            <person name="Gao Y."/>
            <person name="Zhu J."/>
            <person name="Kan B."/>
            <person name="Ding K."/>
            <person name="Chen S."/>
            <person name="Cheng H."/>
            <person name="Yao Z."/>
            <person name="He B."/>
            <person name="Chen R."/>
            <person name="Ma D."/>
            <person name="Qiang B."/>
            <person name="Wen Y."/>
            <person name="Hou Y."/>
            <person name="Yu J."/>
        </authorList>
    </citation>
    <scope>NUCLEOTIDE SEQUENCE [LARGE SCALE GENOMIC DNA]</scope>
    <source>
        <strain>301 / Serotype 2a</strain>
    </source>
</reference>
<reference key="3">
    <citation type="journal article" date="2003" name="Infect. Immun.">
        <title>Complete genome sequence and comparative genomics of Shigella flexneri serotype 2a strain 2457T.</title>
        <authorList>
            <person name="Wei J."/>
            <person name="Goldberg M.B."/>
            <person name="Burland V."/>
            <person name="Venkatesan M.M."/>
            <person name="Deng W."/>
            <person name="Fournier G."/>
            <person name="Mayhew G.F."/>
            <person name="Plunkett G. III"/>
            <person name="Rose D.J."/>
            <person name="Darling A."/>
            <person name="Mau B."/>
            <person name="Perna N.T."/>
            <person name="Payne S.M."/>
            <person name="Runyen-Janecky L.J."/>
            <person name="Zhou S."/>
            <person name="Schwartz D.C."/>
            <person name="Blattner F.R."/>
        </authorList>
    </citation>
    <scope>NUCLEOTIDE SEQUENCE [LARGE SCALE GENOMIC DNA]</scope>
    <source>
        <strain>ATCC 700930 / 2457T / Serotype 2a</strain>
    </source>
</reference>